<keyword id="KW-1185">Reference proteome</keyword>
<keyword id="KW-0678">Repressor</keyword>
<keyword id="KW-0687">Ribonucleoprotein</keyword>
<keyword id="KW-0689">Ribosomal protein</keyword>
<keyword id="KW-0694">RNA-binding</keyword>
<keyword id="KW-0699">rRNA-binding</keyword>
<keyword id="KW-0810">Translation regulation</keyword>
<keyword id="KW-0820">tRNA-binding</keyword>
<feature type="chain" id="PRO_0000308028" description="Large ribosomal subunit protein uL1">
    <location>
        <begin position="1"/>
        <end position="229"/>
    </location>
</feature>
<gene>
    <name evidence="1" type="primary">rplA</name>
    <name type="ordered locus">LSEI_2279</name>
</gene>
<accession>Q035U9</accession>
<comment type="function">
    <text evidence="1">Binds directly to 23S rRNA. The L1 stalk is quite mobile in the ribosome, and is involved in E site tRNA release.</text>
</comment>
<comment type="function">
    <text evidence="1">Protein L1 is also a translational repressor protein, it controls the translation of the L11 operon by binding to its mRNA.</text>
</comment>
<comment type="subunit">
    <text evidence="1">Part of the 50S ribosomal subunit.</text>
</comment>
<comment type="similarity">
    <text evidence="1">Belongs to the universal ribosomal protein uL1 family.</text>
</comment>
<name>RL1_LACP3</name>
<evidence type="ECO:0000255" key="1">
    <source>
        <dbReference type="HAMAP-Rule" id="MF_01318"/>
    </source>
</evidence>
<evidence type="ECO:0000305" key="2"/>
<organism>
    <name type="scientific">Lacticaseibacillus paracasei (strain ATCC 334 / BCRC 17002 / CCUG 31169 / CIP 107868 / KCTC 3260 / NRRL B-441)</name>
    <name type="common">Lactobacillus paracasei</name>
    <dbReference type="NCBI Taxonomy" id="321967"/>
    <lineage>
        <taxon>Bacteria</taxon>
        <taxon>Bacillati</taxon>
        <taxon>Bacillota</taxon>
        <taxon>Bacilli</taxon>
        <taxon>Lactobacillales</taxon>
        <taxon>Lactobacillaceae</taxon>
        <taxon>Lacticaseibacillus</taxon>
    </lineage>
</organism>
<dbReference type="EMBL" id="CP000423">
    <property type="protein sequence ID" value="ABJ71023.1"/>
    <property type="molecule type" value="Genomic_DNA"/>
</dbReference>
<dbReference type="RefSeq" id="WP_003567153.1">
    <property type="nucleotide sequence ID" value="NC_008526.1"/>
</dbReference>
<dbReference type="RefSeq" id="YP_807465.1">
    <property type="nucleotide sequence ID" value="NC_008526.1"/>
</dbReference>
<dbReference type="SMR" id="Q035U9"/>
<dbReference type="STRING" id="321967.LSEI_2279"/>
<dbReference type="PaxDb" id="321967-LSEI_2279"/>
<dbReference type="GeneID" id="57090890"/>
<dbReference type="KEGG" id="lca:LSEI_2279"/>
<dbReference type="PATRIC" id="fig|321967.11.peg.2242"/>
<dbReference type="HOGENOM" id="CLU_062853_0_0_9"/>
<dbReference type="Proteomes" id="UP000001651">
    <property type="component" value="Chromosome"/>
</dbReference>
<dbReference type="GO" id="GO:0015934">
    <property type="term" value="C:large ribosomal subunit"/>
    <property type="evidence" value="ECO:0007669"/>
    <property type="project" value="InterPro"/>
</dbReference>
<dbReference type="GO" id="GO:0019843">
    <property type="term" value="F:rRNA binding"/>
    <property type="evidence" value="ECO:0007669"/>
    <property type="project" value="UniProtKB-UniRule"/>
</dbReference>
<dbReference type="GO" id="GO:0003735">
    <property type="term" value="F:structural constituent of ribosome"/>
    <property type="evidence" value="ECO:0007669"/>
    <property type="project" value="InterPro"/>
</dbReference>
<dbReference type="GO" id="GO:0000049">
    <property type="term" value="F:tRNA binding"/>
    <property type="evidence" value="ECO:0007669"/>
    <property type="project" value="UniProtKB-KW"/>
</dbReference>
<dbReference type="GO" id="GO:0006417">
    <property type="term" value="P:regulation of translation"/>
    <property type="evidence" value="ECO:0007669"/>
    <property type="project" value="UniProtKB-KW"/>
</dbReference>
<dbReference type="GO" id="GO:0006412">
    <property type="term" value="P:translation"/>
    <property type="evidence" value="ECO:0007669"/>
    <property type="project" value="UniProtKB-UniRule"/>
</dbReference>
<dbReference type="CDD" id="cd00403">
    <property type="entry name" value="Ribosomal_L1"/>
    <property type="match status" value="1"/>
</dbReference>
<dbReference type="FunFam" id="3.40.50.790:FF:000001">
    <property type="entry name" value="50S ribosomal protein L1"/>
    <property type="match status" value="1"/>
</dbReference>
<dbReference type="Gene3D" id="3.30.190.20">
    <property type="match status" value="1"/>
</dbReference>
<dbReference type="Gene3D" id="3.40.50.790">
    <property type="match status" value="1"/>
</dbReference>
<dbReference type="HAMAP" id="MF_01318_B">
    <property type="entry name" value="Ribosomal_uL1_B"/>
    <property type="match status" value="1"/>
</dbReference>
<dbReference type="InterPro" id="IPR005878">
    <property type="entry name" value="Ribosom_uL1_bac-type"/>
</dbReference>
<dbReference type="InterPro" id="IPR002143">
    <property type="entry name" value="Ribosomal_uL1"/>
</dbReference>
<dbReference type="InterPro" id="IPR023674">
    <property type="entry name" value="Ribosomal_uL1-like"/>
</dbReference>
<dbReference type="InterPro" id="IPR028364">
    <property type="entry name" value="Ribosomal_uL1/biogenesis"/>
</dbReference>
<dbReference type="InterPro" id="IPR016095">
    <property type="entry name" value="Ribosomal_uL1_3-a/b-sand"/>
</dbReference>
<dbReference type="InterPro" id="IPR023673">
    <property type="entry name" value="Ribosomal_uL1_CS"/>
</dbReference>
<dbReference type="NCBIfam" id="TIGR01169">
    <property type="entry name" value="rplA_bact"/>
    <property type="match status" value="1"/>
</dbReference>
<dbReference type="PANTHER" id="PTHR36427">
    <property type="entry name" value="54S RIBOSOMAL PROTEIN L1, MITOCHONDRIAL"/>
    <property type="match status" value="1"/>
</dbReference>
<dbReference type="PANTHER" id="PTHR36427:SF3">
    <property type="entry name" value="LARGE RIBOSOMAL SUBUNIT PROTEIN UL1M"/>
    <property type="match status" value="1"/>
</dbReference>
<dbReference type="Pfam" id="PF00687">
    <property type="entry name" value="Ribosomal_L1"/>
    <property type="match status" value="1"/>
</dbReference>
<dbReference type="PIRSF" id="PIRSF002155">
    <property type="entry name" value="Ribosomal_L1"/>
    <property type="match status" value="1"/>
</dbReference>
<dbReference type="SUPFAM" id="SSF56808">
    <property type="entry name" value="Ribosomal protein L1"/>
    <property type="match status" value="1"/>
</dbReference>
<dbReference type="PROSITE" id="PS01199">
    <property type="entry name" value="RIBOSOMAL_L1"/>
    <property type="match status" value="1"/>
</dbReference>
<sequence>MAKKGKKYLEAAKAVDPTKQYTPEEAVDLLKKIDFAKFDETVEVAYRLNVDPKQADQQIRGAVVLPNGTGKTAKVIVFAQGDQAKAAEDAGADIVGAEDLVQKIQDGWLDFDVAVATPPMMAQVGRLGRVLGPKGLMPNPKTGTVTMDTAKAVKDIKAGQVAYRVDKAGIIHAPIGKKSFDADKLLENFKAMNDIVLKARPASTKGIYIKSLALTATMAPGIKVNPSDF</sequence>
<proteinExistence type="inferred from homology"/>
<reference key="1">
    <citation type="journal article" date="2006" name="Proc. Natl. Acad. Sci. U.S.A.">
        <title>Comparative genomics of the lactic acid bacteria.</title>
        <authorList>
            <person name="Makarova K.S."/>
            <person name="Slesarev A."/>
            <person name="Wolf Y.I."/>
            <person name="Sorokin A."/>
            <person name="Mirkin B."/>
            <person name="Koonin E.V."/>
            <person name="Pavlov A."/>
            <person name="Pavlova N."/>
            <person name="Karamychev V."/>
            <person name="Polouchine N."/>
            <person name="Shakhova V."/>
            <person name="Grigoriev I."/>
            <person name="Lou Y."/>
            <person name="Rohksar D."/>
            <person name="Lucas S."/>
            <person name="Huang K."/>
            <person name="Goodstein D.M."/>
            <person name="Hawkins T."/>
            <person name="Plengvidhya V."/>
            <person name="Welker D."/>
            <person name="Hughes J."/>
            <person name="Goh Y."/>
            <person name="Benson A."/>
            <person name="Baldwin K."/>
            <person name="Lee J.-H."/>
            <person name="Diaz-Muniz I."/>
            <person name="Dosti B."/>
            <person name="Smeianov V."/>
            <person name="Wechter W."/>
            <person name="Barabote R."/>
            <person name="Lorca G."/>
            <person name="Altermann E."/>
            <person name="Barrangou R."/>
            <person name="Ganesan B."/>
            <person name="Xie Y."/>
            <person name="Rawsthorne H."/>
            <person name="Tamir D."/>
            <person name="Parker C."/>
            <person name="Breidt F."/>
            <person name="Broadbent J.R."/>
            <person name="Hutkins R."/>
            <person name="O'Sullivan D."/>
            <person name="Steele J."/>
            <person name="Unlu G."/>
            <person name="Saier M.H. Jr."/>
            <person name="Klaenhammer T."/>
            <person name="Richardson P."/>
            <person name="Kozyavkin S."/>
            <person name="Weimer B.C."/>
            <person name="Mills D.A."/>
        </authorList>
    </citation>
    <scope>NUCLEOTIDE SEQUENCE [LARGE SCALE GENOMIC DNA]</scope>
    <source>
        <strain>ATCC 334 / BCRC 17002 / CCUG 31169 / CIP 107868 / KCTC 3260 / NRRL B-441</strain>
    </source>
</reference>
<protein>
    <recommendedName>
        <fullName evidence="1">Large ribosomal subunit protein uL1</fullName>
    </recommendedName>
    <alternativeName>
        <fullName evidence="2">50S ribosomal protein L1</fullName>
    </alternativeName>
</protein>